<reference key="1">
    <citation type="journal article" date="2009" name="Genome Res.">
        <title>Comparative genomic analyses of the human fungal pathogens Coccidioides and their relatives.</title>
        <authorList>
            <person name="Sharpton T.J."/>
            <person name="Stajich J.E."/>
            <person name="Rounsley S.D."/>
            <person name="Gardner M.J."/>
            <person name="Wortman J.R."/>
            <person name="Jordar V.S."/>
            <person name="Maiti R."/>
            <person name="Kodira C.D."/>
            <person name="Neafsey D.E."/>
            <person name="Zeng Q."/>
            <person name="Hung C.-Y."/>
            <person name="McMahan C."/>
            <person name="Muszewska A."/>
            <person name="Grynberg M."/>
            <person name="Mandel M.A."/>
            <person name="Kellner E.M."/>
            <person name="Barker B.M."/>
            <person name="Galgiani J.N."/>
            <person name="Orbach M.J."/>
            <person name="Kirkland T.N."/>
            <person name="Cole G.T."/>
            <person name="Henn M.R."/>
            <person name="Birren B.W."/>
            <person name="Taylor J.W."/>
        </authorList>
    </citation>
    <scope>NUCLEOTIDE SEQUENCE [LARGE SCALE GENOMIC DNA]</scope>
    <source>
        <strain>RS</strain>
    </source>
</reference>
<reference key="2">
    <citation type="journal article" date="2010" name="Genome Res.">
        <title>Population genomic sequencing of Coccidioides fungi reveals recent hybridization and transposon control.</title>
        <authorList>
            <person name="Neafsey D.E."/>
            <person name="Barker B.M."/>
            <person name="Sharpton T.J."/>
            <person name="Stajich J.E."/>
            <person name="Park D.J."/>
            <person name="Whiston E."/>
            <person name="Hung C.-Y."/>
            <person name="McMahan C."/>
            <person name="White J."/>
            <person name="Sykes S."/>
            <person name="Heiman D."/>
            <person name="Young S."/>
            <person name="Zeng Q."/>
            <person name="Abouelleil A."/>
            <person name="Aftuck L."/>
            <person name="Bessette D."/>
            <person name="Brown A."/>
            <person name="FitzGerald M."/>
            <person name="Lui A."/>
            <person name="Macdonald J.P."/>
            <person name="Priest M."/>
            <person name="Orbach M.J."/>
            <person name="Galgiani J.N."/>
            <person name="Kirkland T.N."/>
            <person name="Cole G.T."/>
            <person name="Birren B.W."/>
            <person name="Henn M.R."/>
            <person name="Taylor J.W."/>
            <person name="Rounsley S.D."/>
        </authorList>
    </citation>
    <scope>GENOME REANNOTATION</scope>
    <source>
        <strain>RS</strain>
    </source>
</reference>
<feature type="chain" id="PRO_0000278331" description="Dolichyl pyrophosphate Glc1Man9GlcNAc2 alpha-1,3-glucosyltransferase">
    <location>
        <begin position="1"/>
        <end position="501"/>
    </location>
</feature>
<feature type="topological domain" description="Lumenal" evidence="2">
    <location>
        <begin position="1"/>
        <end position="3"/>
    </location>
</feature>
<feature type="transmembrane region" description="Helical" evidence="2">
    <location>
        <begin position="4"/>
        <end position="24"/>
    </location>
</feature>
<feature type="topological domain" description="Cytoplasmic" evidence="2">
    <location>
        <begin position="25"/>
        <end position="63"/>
    </location>
</feature>
<feature type="transmembrane region" description="Helical" evidence="2">
    <location>
        <begin position="64"/>
        <end position="84"/>
    </location>
</feature>
<feature type="topological domain" description="Lumenal" evidence="2">
    <location>
        <begin position="85"/>
        <end position="142"/>
    </location>
</feature>
<feature type="transmembrane region" description="Helical" evidence="2">
    <location>
        <begin position="143"/>
        <end position="163"/>
    </location>
</feature>
<feature type="topological domain" description="Cytoplasmic" evidence="2">
    <location>
        <begin position="164"/>
        <end position="182"/>
    </location>
</feature>
<feature type="transmembrane region" description="Helical" evidence="2">
    <location>
        <begin position="183"/>
        <end position="203"/>
    </location>
</feature>
<feature type="topological domain" description="Lumenal" evidence="2">
    <location>
        <begin position="204"/>
        <end position="220"/>
    </location>
</feature>
<feature type="transmembrane region" description="Helical" evidence="2">
    <location>
        <begin position="221"/>
        <end position="241"/>
    </location>
</feature>
<feature type="topological domain" description="Cytoplasmic" evidence="2">
    <location>
        <begin position="242"/>
        <end position="252"/>
    </location>
</feature>
<feature type="transmembrane region" description="Helical" evidence="2">
    <location>
        <begin position="253"/>
        <end position="275"/>
    </location>
</feature>
<feature type="topological domain" description="Lumenal" evidence="2">
    <location>
        <begin position="276"/>
        <end position="319"/>
    </location>
</feature>
<feature type="transmembrane region" description="Helical" evidence="2">
    <location>
        <begin position="320"/>
        <end position="340"/>
    </location>
</feature>
<feature type="topological domain" description="Cytoplasmic" evidence="2">
    <location>
        <begin position="341"/>
        <end position="342"/>
    </location>
</feature>
<feature type="transmembrane region" description="Helical" evidence="2">
    <location>
        <begin position="343"/>
        <end position="360"/>
    </location>
</feature>
<feature type="topological domain" description="Lumenal" evidence="2">
    <location>
        <begin position="361"/>
        <end position="364"/>
    </location>
</feature>
<feature type="transmembrane region" description="Helical" evidence="2">
    <location>
        <begin position="365"/>
        <end position="387"/>
    </location>
</feature>
<feature type="topological domain" description="Cytoplasmic" evidence="2">
    <location>
        <begin position="388"/>
        <end position="389"/>
    </location>
</feature>
<feature type="transmembrane region" description="Helical" evidence="2">
    <location>
        <begin position="390"/>
        <end position="410"/>
    </location>
</feature>
<feature type="topological domain" description="Lumenal" evidence="2">
    <location>
        <begin position="411"/>
        <end position="412"/>
    </location>
</feature>
<feature type="transmembrane region" description="Helical" evidence="2">
    <location>
        <begin position="413"/>
        <end position="433"/>
    </location>
</feature>
<feature type="topological domain" description="Cytoplasmic" evidence="2">
    <location>
        <begin position="434"/>
        <end position="446"/>
    </location>
</feature>
<feature type="transmembrane region" description="Helical" evidence="2">
    <location>
        <begin position="447"/>
        <end position="467"/>
    </location>
</feature>
<feature type="topological domain" description="Lumenal" evidence="2">
    <location>
        <begin position="468"/>
        <end position="476"/>
    </location>
</feature>
<feature type="transmembrane region" description="Helical" evidence="2">
    <location>
        <begin position="477"/>
        <end position="497"/>
    </location>
</feature>
<feature type="topological domain" description="Cytoplasmic" evidence="2">
    <location>
        <begin position="498"/>
        <end position="501"/>
    </location>
</feature>
<proteinExistence type="inferred from homology"/>
<protein>
    <recommendedName>
        <fullName evidence="1">Dolichyl pyrophosphate Glc1Man9GlcNAc2 alpha-1,3-glucosyltransferase</fullName>
        <ecNumber evidence="1">2.4.1.265</ecNumber>
    </recommendedName>
    <alternativeName>
        <fullName>Asparagine-linked glycosylation protein 8</fullName>
    </alternativeName>
    <alternativeName>
        <fullName>Dol-P-Glc:Glc(1)Man(9)GlcNAc(2)-PP-dolichyl alpha-1,3-glucosyltransferase</fullName>
    </alternativeName>
    <alternativeName>
        <fullName>Dolichyl-P-Glc:Glc1Man9GlcNAc2-PP-dolichyl glucosyltransferase</fullName>
    </alternativeName>
</protein>
<keyword id="KW-0256">Endoplasmic reticulum</keyword>
<keyword id="KW-0328">Glycosyltransferase</keyword>
<keyword id="KW-0472">Membrane</keyword>
<keyword id="KW-1185">Reference proteome</keyword>
<keyword id="KW-0808">Transferase</keyword>
<keyword id="KW-0812">Transmembrane</keyword>
<keyword id="KW-1133">Transmembrane helix</keyword>
<name>ALG8_COCIM</name>
<sequence length="501" mass="57019">MAEFFPSLTQCALVAAAFKVLLFPAYKSTDFEVHRNWLAITHSLPVQDWYYEKTSEWTLDYPPFFAGLEWLLSKVAFFVDPAMLQLGNLNYDSWQTIYFQRSSVIFLELMLVYALNRYIKSVPAPSKHLAHAASLSILLSPGLLIIDHIHFQYNGFLYGILILSIVLARKQSTLLYSGVTFAILLCLKHIYLYLSLAYFVYLLRAYCLDPNSVFRPRFGNIIKLGIGVTSVFAAAFGPFVYWGQLNQIKERLFPFSRGLCHAYWAPNIWAMYSFVDRVLIPVAPRLGLPIKADALTSVTRGLVGDTSFAILPEVKKEHTFALTLFFQLLPLLKLWLQPNWDNFVGSITLCAYAAFLFGWHVHEKAILLIILPFSLLALKDLRYLGAFRPLAVAGHVSLFPLLFTAAEFPVKTVYTVLWLVLFLFTFERLAPVPARPRVFLLDRFSLLYDTVSIPLIVYCSLVHGWLFGGRMEFLPLMFTSSYAALGVVGSWVGFMVVYFTS</sequence>
<evidence type="ECO:0000250" key="1">
    <source>
        <dbReference type="UniProtKB" id="P40351"/>
    </source>
</evidence>
<evidence type="ECO:0000255" key="2"/>
<evidence type="ECO:0000305" key="3"/>
<gene>
    <name type="primary">ALG8</name>
    <name type="ORF">CIMG_09445</name>
</gene>
<accession>Q1DJR8</accession>
<accession>J3K343</accession>
<comment type="function">
    <text evidence="1">Dolichyl pyrophosphate Glc1Man9GlcNAc2 alpha-1,3-glucosyltransferase that operates in the biosynthetic pathway of dolichol-linked oligosaccharides, the glycan precursors employed in protein asparagine (N)-glycosylation. The assembly of dolichol-linked oligosaccharides begins on the cytosolic side of the endoplasmic reticulum membrane and finishes in its lumen. The sequential addition of sugars to dolichol pyrophosphate produces dolichol-linked oligosaccharides containing fourteen sugars, including two GlcNAcs, nine mannoses and three glucoses. Once assembled, the oligosaccharide is transferred from the lipid to nascent proteins by oligosaccharyltransferases. In the lumen of the endoplasmic reticulum, adds the second glucose residue from dolichyl phosphate glucose (Dol-P-Glc) onto the lipid-linked oligosaccharide intermediate Glc(1)Man(9)GlcNAc(2)-PP-Dol to produce Glc(2)Man(9)GlcNAc(2)-PP-Dol.</text>
</comment>
<comment type="catalytic activity">
    <reaction evidence="1">
        <text>an alpha-D-Glc-(1-&gt;3)-alpha-D-Man-(1-&gt;2)-alpha-D-Man-(1-&gt;2)-alpha-D-Man-(1-&gt;3)-[alpha-D-Man-(1-&gt;2)-alpha-D-Man-(1-&gt;3)-[alpha-D-Man-(1-&gt;2)-alpha-D-Man-(1-&gt;6)]-alpha-D-Man-(1-&gt;6)]-beta-D-Man-(1-&gt;4)-beta-D-GlcNAc-(1-&gt;4)-alpha-D-GlcNAc-diphospho-di-trans,poly-cis-dolichol + a di-trans,poly-cis-dolichyl beta-D-glucosyl phosphate = an alpha-D-Glc-(1-&gt;3)-alpha-D-Glc-(1-&gt;3)-alpha-D-Man-(1-&gt;2)-alpha-D-Man-(1-&gt;2)-alpha-D-Man-(1-&gt;3)-[alpha-D-Man-(1-&gt;2)-alpha-D-Man-(1-&gt;3)-[alpha-D-Man-(1-&gt;2)-alpha-D-Man-(1-&gt;6)]-alpha-D-Man-(1-&gt;6)]-beta-D-Man-(1-&gt;4)-beta-D-GlcNAc-(1-&gt;4)-alpha-D-GlcNAc-diphospho-di-trans,poly-cis-dolichol + a di-trans,poly-cis-dolichyl phosphate + H(+)</text>
        <dbReference type="Rhea" id="RHEA:31307"/>
        <dbReference type="Rhea" id="RHEA-COMP:19498"/>
        <dbReference type="Rhea" id="RHEA-COMP:19502"/>
        <dbReference type="Rhea" id="RHEA-COMP:19521"/>
        <dbReference type="Rhea" id="RHEA-COMP:19522"/>
        <dbReference type="ChEBI" id="CHEBI:15378"/>
        <dbReference type="ChEBI" id="CHEBI:57525"/>
        <dbReference type="ChEBI" id="CHEBI:57683"/>
        <dbReference type="ChEBI" id="CHEBI:132521"/>
        <dbReference type="ChEBI" id="CHEBI:132522"/>
        <dbReference type="EC" id="2.4.1.265"/>
    </reaction>
    <physiologicalReaction direction="left-to-right" evidence="1">
        <dbReference type="Rhea" id="RHEA:31308"/>
    </physiologicalReaction>
</comment>
<comment type="pathway">
    <text evidence="1">Protein modification; protein glycosylation.</text>
</comment>
<comment type="subcellular location">
    <subcellularLocation>
        <location evidence="1">Endoplasmic reticulum membrane</location>
        <topology evidence="2">Multi-pass membrane protein</topology>
    </subcellularLocation>
</comment>
<comment type="similarity">
    <text evidence="3">Belongs to the ALG6/ALG8 glucosyltransferase family.</text>
</comment>
<organism>
    <name type="scientific">Coccidioides immitis (strain RS)</name>
    <name type="common">Valley fever fungus</name>
    <dbReference type="NCBI Taxonomy" id="246410"/>
    <lineage>
        <taxon>Eukaryota</taxon>
        <taxon>Fungi</taxon>
        <taxon>Dikarya</taxon>
        <taxon>Ascomycota</taxon>
        <taxon>Pezizomycotina</taxon>
        <taxon>Eurotiomycetes</taxon>
        <taxon>Eurotiomycetidae</taxon>
        <taxon>Onygenales</taxon>
        <taxon>Onygenaceae</taxon>
        <taxon>Coccidioides</taxon>
    </lineage>
</organism>
<dbReference type="EC" id="2.4.1.265" evidence="1"/>
<dbReference type="EMBL" id="GG704915">
    <property type="protein sequence ID" value="EAS28241.3"/>
    <property type="molecule type" value="Genomic_DNA"/>
</dbReference>
<dbReference type="RefSeq" id="XP_001239824.1">
    <property type="nucleotide sequence ID" value="XM_001239823.2"/>
</dbReference>
<dbReference type="SMR" id="Q1DJR8"/>
<dbReference type="FunCoup" id="Q1DJR8">
    <property type="interactions" value="763"/>
</dbReference>
<dbReference type="STRING" id="246410.Q1DJR8"/>
<dbReference type="GeneID" id="4559127"/>
<dbReference type="KEGG" id="cim:CIMG_09445"/>
<dbReference type="VEuPathDB" id="FungiDB:CIMG_09445"/>
<dbReference type="InParanoid" id="Q1DJR8"/>
<dbReference type="OMA" id="YHSTDFD"/>
<dbReference type="OrthoDB" id="1689333at2759"/>
<dbReference type="UniPathway" id="UPA00378"/>
<dbReference type="Proteomes" id="UP000001261">
    <property type="component" value="Unassembled WGS sequence"/>
</dbReference>
<dbReference type="GO" id="GO:0005789">
    <property type="term" value="C:endoplasmic reticulum membrane"/>
    <property type="evidence" value="ECO:0000250"/>
    <property type="project" value="UniProtKB"/>
</dbReference>
<dbReference type="GO" id="GO:0042283">
    <property type="term" value="F:dolichyl pyrophosphate Glc1Man9GlcNAc2 alpha-1,3-glucosyltransferase activity"/>
    <property type="evidence" value="ECO:0000250"/>
    <property type="project" value="UniProtKB"/>
</dbReference>
<dbReference type="GO" id="GO:0006488">
    <property type="term" value="P:dolichol-linked oligosaccharide biosynthetic process"/>
    <property type="evidence" value="ECO:0000250"/>
    <property type="project" value="UniProtKB"/>
</dbReference>
<dbReference type="GO" id="GO:0006487">
    <property type="term" value="P:protein N-linked glycosylation"/>
    <property type="evidence" value="ECO:0000250"/>
    <property type="project" value="UniProtKB"/>
</dbReference>
<dbReference type="InterPro" id="IPR004856">
    <property type="entry name" value="Glyco_trans_ALG6/ALG8"/>
</dbReference>
<dbReference type="PANTHER" id="PTHR12413">
    <property type="entry name" value="DOLICHYL GLYCOSYLTRANSFERASE"/>
    <property type="match status" value="1"/>
</dbReference>
<dbReference type="PANTHER" id="PTHR12413:SF2">
    <property type="entry name" value="DOLICHYL PYROPHOSPHATE GLC1MAN9GLCNAC2 ALPHA-1,3-GLUCOSYLTRANSFERASE-RELATED"/>
    <property type="match status" value="1"/>
</dbReference>
<dbReference type="Pfam" id="PF03155">
    <property type="entry name" value="Alg6_Alg8"/>
    <property type="match status" value="1"/>
</dbReference>